<comment type="function">
    <text evidence="1">One of two assembly initiator proteins, it binds directly to the 5'-end of the 23S rRNA, where it nucleates assembly of the 50S subunit.</text>
</comment>
<comment type="function">
    <text evidence="1">One of the proteins that surrounds the polypeptide exit tunnel on the outside of the subunit.</text>
</comment>
<comment type="subunit">
    <text evidence="1">Part of the 50S ribosomal subunit.</text>
</comment>
<comment type="similarity">
    <text evidence="1">Belongs to the universal ribosomal protein uL24 family.</text>
</comment>
<name>RL24_LISW6</name>
<accession>A0ALV7</accession>
<sequence>MHVKKGDKVKVITGKDKGKSGKVLAAFPKKDRVLIEGINMVKKHTKPSNINPQGGILNVEAPIHVSNVMLIDPKTGEPTRVGYEVKGDKKVRVAKKSGEVIDK</sequence>
<keyword id="KW-0687">Ribonucleoprotein</keyword>
<keyword id="KW-0689">Ribosomal protein</keyword>
<keyword id="KW-0694">RNA-binding</keyword>
<keyword id="KW-0699">rRNA-binding</keyword>
<evidence type="ECO:0000255" key="1">
    <source>
        <dbReference type="HAMAP-Rule" id="MF_01326"/>
    </source>
</evidence>
<evidence type="ECO:0000305" key="2"/>
<reference key="1">
    <citation type="journal article" date="2006" name="J. Bacteriol.">
        <title>Whole-genome sequence of Listeria welshimeri reveals common steps in genome reduction with Listeria innocua as compared to Listeria monocytogenes.</title>
        <authorList>
            <person name="Hain T."/>
            <person name="Steinweg C."/>
            <person name="Kuenne C.T."/>
            <person name="Billion A."/>
            <person name="Ghai R."/>
            <person name="Chatterjee S.S."/>
            <person name="Domann E."/>
            <person name="Kaerst U."/>
            <person name="Goesmann A."/>
            <person name="Bekel T."/>
            <person name="Bartels D."/>
            <person name="Kaiser O."/>
            <person name="Meyer F."/>
            <person name="Puehler A."/>
            <person name="Weisshaar B."/>
            <person name="Wehland J."/>
            <person name="Liang C."/>
            <person name="Dandekar T."/>
            <person name="Lampidis R."/>
            <person name="Kreft J."/>
            <person name="Goebel W."/>
            <person name="Chakraborty T."/>
        </authorList>
    </citation>
    <scope>NUCLEOTIDE SEQUENCE [LARGE SCALE GENOMIC DNA]</scope>
    <source>
        <strain>ATCC 35897 / DSM 20650 / CCUG 15529 / CIP 8149 / NCTC 11857 / SLCC 5334 / V8</strain>
    </source>
</reference>
<proteinExistence type="inferred from homology"/>
<gene>
    <name evidence="1" type="primary">rplX</name>
    <name type="ordered locus">lwe2571</name>
</gene>
<protein>
    <recommendedName>
        <fullName evidence="1">Large ribosomal subunit protein uL24</fullName>
    </recommendedName>
    <alternativeName>
        <fullName evidence="2">50S ribosomal protein L24</fullName>
    </alternativeName>
</protein>
<organism>
    <name type="scientific">Listeria welshimeri serovar 6b (strain ATCC 35897 / DSM 20650 / CCUG 15529 / CIP 8149 / NCTC 11857 / SLCC 5334 / V8)</name>
    <dbReference type="NCBI Taxonomy" id="386043"/>
    <lineage>
        <taxon>Bacteria</taxon>
        <taxon>Bacillati</taxon>
        <taxon>Bacillota</taxon>
        <taxon>Bacilli</taxon>
        <taxon>Bacillales</taxon>
        <taxon>Listeriaceae</taxon>
        <taxon>Listeria</taxon>
    </lineage>
</organism>
<dbReference type="EMBL" id="AM263198">
    <property type="protein sequence ID" value="CAK21989.1"/>
    <property type="molecule type" value="Genomic_DNA"/>
</dbReference>
<dbReference type="RefSeq" id="WP_003720939.1">
    <property type="nucleotide sequence ID" value="NC_008555.1"/>
</dbReference>
<dbReference type="SMR" id="A0ALV7"/>
<dbReference type="STRING" id="386043.lwe2571"/>
<dbReference type="GeneID" id="93236043"/>
<dbReference type="KEGG" id="lwe:lwe2571"/>
<dbReference type="eggNOG" id="COG0198">
    <property type="taxonomic scope" value="Bacteria"/>
</dbReference>
<dbReference type="HOGENOM" id="CLU_093315_2_0_9"/>
<dbReference type="OrthoDB" id="9807419at2"/>
<dbReference type="Proteomes" id="UP000000779">
    <property type="component" value="Chromosome"/>
</dbReference>
<dbReference type="GO" id="GO:1990904">
    <property type="term" value="C:ribonucleoprotein complex"/>
    <property type="evidence" value="ECO:0007669"/>
    <property type="project" value="UniProtKB-KW"/>
</dbReference>
<dbReference type="GO" id="GO:0005840">
    <property type="term" value="C:ribosome"/>
    <property type="evidence" value="ECO:0007669"/>
    <property type="project" value="UniProtKB-KW"/>
</dbReference>
<dbReference type="GO" id="GO:0019843">
    <property type="term" value="F:rRNA binding"/>
    <property type="evidence" value="ECO:0007669"/>
    <property type="project" value="UniProtKB-UniRule"/>
</dbReference>
<dbReference type="GO" id="GO:0003735">
    <property type="term" value="F:structural constituent of ribosome"/>
    <property type="evidence" value="ECO:0007669"/>
    <property type="project" value="InterPro"/>
</dbReference>
<dbReference type="GO" id="GO:0006412">
    <property type="term" value="P:translation"/>
    <property type="evidence" value="ECO:0007669"/>
    <property type="project" value="UniProtKB-UniRule"/>
</dbReference>
<dbReference type="CDD" id="cd06089">
    <property type="entry name" value="KOW_RPL26"/>
    <property type="match status" value="1"/>
</dbReference>
<dbReference type="FunFam" id="2.30.30.30:FF:000004">
    <property type="entry name" value="50S ribosomal protein L24"/>
    <property type="match status" value="1"/>
</dbReference>
<dbReference type="Gene3D" id="2.30.30.30">
    <property type="match status" value="1"/>
</dbReference>
<dbReference type="HAMAP" id="MF_01326_B">
    <property type="entry name" value="Ribosomal_uL24_B"/>
    <property type="match status" value="1"/>
</dbReference>
<dbReference type="InterPro" id="IPR005824">
    <property type="entry name" value="KOW"/>
</dbReference>
<dbReference type="InterPro" id="IPR014722">
    <property type="entry name" value="Rib_uL2_dom2"/>
</dbReference>
<dbReference type="InterPro" id="IPR003256">
    <property type="entry name" value="Ribosomal_uL24"/>
</dbReference>
<dbReference type="InterPro" id="IPR005825">
    <property type="entry name" value="Ribosomal_uL24_CS"/>
</dbReference>
<dbReference type="InterPro" id="IPR041988">
    <property type="entry name" value="Ribosomal_uL24_KOW"/>
</dbReference>
<dbReference type="InterPro" id="IPR008991">
    <property type="entry name" value="Translation_prot_SH3-like_sf"/>
</dbReference>
<dbReference type="NCBIfam" id="TIGR01079">
    <property type="entry name" value="rplX_bact"/>
    <property type="match status" value="1"/>
</dbReference>
<dbReference type="PANTHER" id="PTHR12903">
    <property type="entry name" value="MITOCHONDRIAL RIBOSOMAL PROTEIN L24"/>
    <property type="match status" value="1"/>
</dbReference>
<dbReference type="Pfam" id="PF00467">
    <property type="entry name" value="KOW"/>
    <property type="match status" value="1"/>
</dbReference>
<dbReference type="Pfam" id="PF17136">
    <property type="entry name" value="ribosomal_L24"/>
    <property type="match status" value="1"/>
</dbReference>
<dbReference type="SMART" id="SM00739">
    <property type="entry name" value="KOW"/>
    <property type="match status" value="1"/>
</dbReference>
<dbReference type="SUPFAM" id="SSF50104">
    <property type="entry name" value="Translation proteins SH3-like domain"/>
    <property type="match status" value="1"/>
</dbReference>
<dbReference type="PROSITE" id="PS01108">
    <property type="entry name" value="RIBOSOMAL_L24"/>
    <property type="match status" value="1"/>
</dbReference>
<feature type="chain" id="PRO_1000052242" description="Large ribosomal subunit protein uL24">
    <location>
        <begin position="1"/>
        <end position="103"/>
    </location>
</feature>